<organism>
    <name type="scientific">Clostridium acetobutylicum (strain ATCC 824 / DSM 792 / JCM 1419 / IAM 19013 / LMG 5710 / NBRC 13948 / NRRL B-527 / VKM B-1787 / 2291 / W)</name>
    <dbReference type="NCBI Taxonomy" id="272562"/>
    <lineage>
        <taxon>Bacteria</taxon>
        <taxon>Bacillati</taxon>
        <taxon>Bacillota</taxon>
        <taxon>Clostridia</taxon>
        <taxon>Eubacteriales</taxon>
        <taxon>Clostridiaceae</taxon>
        <taxon>Clostridium</taxon>
    </lineage>
</organism>
<evidence type="ECO:0000305" key="1"/>
<sequence length="86" mass="9299">MKKIGVESGLSAIADYLKNEGYSVELLGGNLENNAAKCDSFDAVVTADYNTNMMGFCNTSTKTPIVNASGLTREEVKNMIEQKTSR</sequence>
<accession>Q97J00</accession>
<protein>
    <recommendedName>
        <fullName>UPF0180 protein CA_C1486</fullName>
    </recommendedName>
</protein>
<keyword id="KW-1185">Reference proteome</keyword>
<dbReference type="EMBL" id="AE001437">
    <property type="protein sequence ID" value="AAK79454.1"/>
    <property type="molecule type" value="Genomic_DNA"/>
</dbReference>
<dbReference type="PIR" id="C97083">
    <property type="entry name" value="C97083"/>
</dbReference>
<dbReference type="RefSeq" id="NP_348114.1">
    <property type="nucleotide sequence ID" value="NC_003030.1"/>
</dbReference>
<dbReference type="RefSeq" id="WP_010964795.1">
    <property type="nucleotide sequence ID" value="NC_003030.1"/>
</dbReference>
<dbReference type="SMR" id="Q97J00"/>
<dbReference type="STRING" id="272562.CA_C1486"/>
<dbReference type="KEGG" id="cac:CA_C1486"/>
<dbReference type="PATRIC" id="fig|272562.8.peg.1688"/>
<dbReference type="eggNOG" id="ENOG50309CI">
    <property type="taxonomic scope" value="Bacteria"/>
</dbReference>
<dbReference type="HOGENOM" id="CLU_187365_0_0_9"/>
<dbReference type="OrthoDB" id="1708042at2"/>
<dbReference type="Proteomes" id="UP000000814">
    <property type="component" value="Chromosome"/>
</dbReference>
<dbReference type="HAMAP" id="MF_00506">
    <property type="entry name" value="UPF0180"/>
    <property type="match status" value="1"/>
</dbReference>
<dbReference type="InterPro" id="IPR005370">
    <property type="entry name" value="UPF0180"/>
</dbReference>
<dbReference type="Pfam" id="PF03698">
    <property type="entry name" value="UPF0180"/>
    <property type="match status" value="1"/>
</dbReference>
<gene>
    <name type="ordered locus">CA_C1486</name>
</gene>
<comment type="similarity">
    <text evidence="1">Belongs to the UPF0180 family.</text>
</comment>
<proteinExistence type="inferred from homology"/>
<reference key="1">
    <citation type="journal article" date="2001" name="J. Bacteriol.">
        <title>Genome sequence and comparative analysis of the solvent-producing bacterium Clostridium acetobutylicum.</title>
        <authorList>
            <person name="Noelling J."/>
            <person name="Breton G."/>
            <person name="Omelchenko M.V."/>
            <person name="Makarova K.S."/>
            <person name="Zeng Q."/>
            <person name="Gibson R."/>
            <person name="Lee H.M."/>
            <person name="Dubois J."/>
            <person name="Qiu D."/>
            <person name="Hitti J."/>
            <person name="Wolf Y.I."/>
            <person name="Tatusov R.L."/>
            <person name="Sabathe F."/>
            <person name="Doucette-Stamm L.A."/>
            <person name="Soucaille P."/>
            <person name="Daly M.J."/>
            <person name="Bennett G.N."/>
            <person name="Koonin E.V."/>
            <person name="Smith D.R."/>
        </authorList>
    </citation>
    <scope>NUCLEOTIDE SEQUENCE [LARGE SCALE GENOMIC DNA]</scope>
    <source>
        <strain>ATCC 824 / DSM 792 / JCM 1419 / IAM 19013 / LMG 5710 / NBRC 13948 / NRRL B-527 / VKM B-1787 / 2291 / W</strain>
    </source>
</reference>
<feature type="chain" id="PRO_0000172743" description="UPF0180 protein CA_C1486">
    <location>
        <begin position="1"/>
        <end position="86"/>
    </location>
</feature>
<name>Y1486_CLOAB</name>